<accession>Q5HST3</accession>
<keyword id="KW-0963">Cytoplasm</keyword>
<keyword id="KW-0342">GTP-binding</keyword>
<keyword id="KW-0436">Ligase</keyword>
<keyword id="KW-0460">Magnesium</keyword>
<keyword id="KW-0479">Metal-binding</keyword>
<keyword id="KW-0547">Nucleotide-binding</keyword>
<keyword id="KW-0658">Purine biosynthesis</keyword>
<evidence type="ECO:0000255" key="1">
    <source>
        <dbReference type="HAMAP-Rule" id="MF_00011"/>
    </source>
</evidence>
<reference key="1">
    <citation type="journal article" date="2005" name="PLoS Biol.">
        <title>Major structural differences and novel potential virulence mechanisms from the genomes of multiple Campylobacter species.</title>
        <authorList>
            <person name="Fouts D.E."/>
            <person name="Mongodin E.F."/>
            <person name="Mandrell R.E."/>
            <person name="Miller W.G."/>
            <person name="Rasko D.A."/>
            <person name="Ravel J."/>
            <person name="Brinkac L.M."/>
            <person name="DeBoy R.T."/>
            <person name="Parker C.T."/>
            <person name="Daugherty S.C."/>
            <person name="Dodson R.J."/>
            <person name="Durkin A.S."/>
            <person name="Madupu R."/>
            <person name="Sullivan S.A."/>
            <person name="Shetty J.U."/>
            <person name="Ayodeji M.A."/>
            <person name="Shvartsbeyn A."/>
            <person name="Schatz M.C."/>
            <person name="Badger J.H."/>
            <person name="Fraser C.M."/>
            <person name="Nelson K.E."/>
        </authorList>
    </citation>
    <scope>NUCLEOTIDE SEQUENCE [LARGE SCALE GENOMIC DNA]</scope>
    <source>
        <strain>RM1221</strain>
    </source>
</reference>
<comment type="function">
    <text evidence="1">Plays an important role in the de novo pathway of purine nucleotide biosynthesis. Catalyzes the first committed step in the biosynthesis of AMP from IMP.</text>
</comment>
<comment type="catalytic activity">
    <reaction evidence="1">
        <text>IMP + L-aspartate + GTP = N(6)-(1,2-dicarboxyethyl)-AMP + GDP + phosphate + 2 H(+)</text>
        <dbReference type="Rhea" id="RHEA:15753"/>
        <dbReference type="ChEBI" id="CHEBI:15378"/>
        <dbReference type="ChEBI" id="CHEBI:29991"/>
        <dbReference type="ChEBI" id="CHEBI:37565"/>
        <dbReference type="ChEBI" id="CHEBI:43474"/>
        <dbReference type="ChEBI" id="CHEBI:57567"/>
        <dbReference type="ChEBI" id="CHEBI:58053"/>
        <dbReference type="ChEBI" id="CHEBI:58189"/>
        <dbReference type="EC" id="6.3.4.4"/>
    </reaction>
</comment>
<comment type="cofactor">
    <cofactor evidence="1">
        <name>Mg(2+)</name>
        <dbReference type="ChEBI" id="CHEBI:18420"/>
    </cofactor>
    <text evidence="1">Binds 1 Mg(2+) ion per subunit.</text>
</comment>
<comment type="pathway">
    <text evidence="1">Purine metabolism; AMP biosynthesis via de novo pathway; AMP from IMP: step 1/2.</text>
</comment>
<comment type="subunit">
    <text evidence="1">Homodimer.</text>
</comment>
<comment type="subcellular location">
    <subcellularLocation>
        <location evidence="1">Cytoplasm</location>
    </subcellularLocation>
</comment>
<comment type="similarity">
    <text evidence="1">Belongs to the adenylosuccinate synthetase family.</text>
</comment>
<feature type="chain" id="PRO_0000095161" description="Adenylosuccinate synthetase">
    <location>
        <begin position="1"/>
        <end position="416"/>
    </location>
</feature>
<feature type="active site" description="Proton acceptor" evidence="1">
    <location>
        <position position="14"/>
    </location>
</feature>
<feature type="active site" description="Proton donor" evidence="1">
    <location>
        <position position="42"/>
    </location>
</feature>
<feature type="binding site" evidence="1">
    <location>
        <begin position="13"/>
        <end position="19"/>
    </location>
    <ligand>
        <name>GTP</name>
        <dbReference type="ChEBI" id="CHEBI:37565"/>
    </ligand>
</feature>
<feature type="binding site" description="in other chain" evidence="1">
    <location>
        <begin position="14"/>
        <end position="17"/>
    </location>
    <ligand>
        <name>IMP</name>
        <dbReference type="ChEBI" id="CHEBI:58053"/>
        <note>ligand shared between dimeric partners</note>
    </ligand>
</feature>
<feature type="binding site" evidence="1">
    <location>
        <position position="14"/>
    </location>
    <ligand>
        <name>Mg(2+)</name>
        <dbReference type="ChEBI" id="CHEBI:18420"/>
    </ligand>
</feature>
<feature type="binding site" description="in other chain" evidence="1">
    <location>
        <begin position="39"/>
        <end position="42"/>
    </location>
    <ligand>
        <name>IMP</name>
        <dbReference type="ChEBI" id="CHEBI:58053"/>
        <note>ligand shared between dimeric partners</note>
    </ligand>
</feature>
<feature type="binding site" evidence="1">
    <location>
        <begin position="41"/>
        <end position="43"/>
    </location>
    <ligand>
        <name>GTP</name>
        <dbReference type="ChEBI" id="CHEBI:37565"/>
    </ligand>
</feature>
<feature type="binding site" evidence="1">
    <location>
        <position position="41"/>
    </location>
    <ligand>
        <name>Mg(2+)</name>
        <dbReference type="ChEBI" id="CHEBI:18420"/>
    </ligand>
</feature>
<feature type="binding site" description="in other chain" evidence="1">
    <location>
        <position position="126"/>
    </location>
    <ligand>
        <name>IMP</name>
        <dbReference type="ChEBI" id="CHEBI:58053"/>
        <note>ligand shared between dimeric partners</note>
    </ligand>
</feature>
<feature type="binding site" evidence="1">
    <location>
        <position position="140"/>
    </location>
    <ligand>
        <name>IMP</name>
        <dbReference type="ChEBI" id="CHEBI:58053"/>
        <note>ligand shared between dimeric partners</note>
    </ligand>
</feature>
<feature type="binding site" description="in other chain" evidence="1">
    <location>
        <position position="220"/>
    </location>
    <ligand>
        <name>IMP</name>
        <dbReference type="ChEBI" id="CHEBI:58053"/>
        <note>ligand shared between dimeric partners</note>
    </ligand>
</feature>
<feature type="binding site" description="in other chain" evidence="1">
    <location>
        <position position="235"/>
    </location>
    <ligand>
        <name>IMP</name>
        <dbReference type="ChEBI" id="CHEBI:58053"/>
        <note>ligand shared between dimeric partners</note>
    </ligand>
</feature>
<feature type="binding site" evidence="1">
    <location>
        <begin position="295"/>
        <end position="301"/>
    </location>
    <ligand>
        <name>substrate</name>
    </ligand>
</feature>
<feature type="binding site" description="in other chain" evidence="1">
    <location>
        <position position="299"/>
    </location>
    <ligand>
        <name>IMP</name>
        <dbReference type="ChEBI" id="CHEBI:58053"/>
        <note>ligand shared between dimeric partners</note>
    </ligand>
</feature>
<feature type="binding site" evidence="1">
    <location>
        <position position="301"/>
    </location>
    <ligand>
        <name>GTP</name>
        <dbReference type="ChEBI" id="CHEBI:37565"/>
    </ligand>
</feature>
<feature type="binding site" evidence="1">
    <location>
        <begin position="327"/>
        <end position="329"/>
    </location>
    <ligand>
        <name>GTP</name>
        <dbReference type="ChEBI" id="CHEBI:37565"/>
    </ligand>
</feature>
<feature type="binding site" evidence="1">
    <location>
        <begin position="405"/>
        <end position="407"/>
    </location>
    <ligand>
        <name>GTP</name>
        <dbReference type="ChEBI" id="CHEBI:37565"/>
    </ligand>
</feature>
<sequence length="416" mass="46094">MSKADIIVGIQWGDEGKGKVVDKLCENYDFVCRSAGGHNAGHTIWVNGVRYALHLMPSGVLHPRCINIIGNGVVVSPEVLIAEMAQFENLKGRLYISDRAHLNLKHHSLIDIAKEKLKGKNAIGTTGKGIGPSYADKINRTGHRVGELLEPQRLCEALIKDFEANKTFFEMLEIEIPSAEELLADLKRFNEILTPYITDTTRMLWKALDEDKRVLLEGAQGSMLDIDHGTYPYVTSSSTISAGALTGLGLNPKEAGNIIGIVKAYATRVGNGAFPTEDKGEDGEKIAQIGKEIGVSTGRKRRCGWFDAVAVRYTARLNGLDALSLMKLDVLDGFEKIKICRAYEYKGMEIDYIPSDLENVQPIYEEMDGWDKVFGIKDYDLLPENAKKYIARLEELAGVKVKYISTSPERDDTIIL</sequence>
<gene>
    <name evidence="1" type="primary">purA</name>
    <name type="ordered locus">CJE1671</name>
</gene>
<protein>
    <recommendedName>
        <fullName evidence="1">Adenylosuccinate synthetase</fullName>
        <shortName evidence="1">AMPSase</shortName>
        <shortName evidence="1">AdSS</shortName>
        <ecNumber evidence="1">6.3.4.4</ecNumber>
    </recommendedName>
    <alternativeName>
        <fullName evidence="1">IMP--aspartate ligase</fullName>
    </alternativeName>
</protein>
<organism>
    <name type="scientific">Campylobacter jejuni (strain RM1221)</name>
    <dbReference type="NCBI Taxonomy" id="195099"/>
    <lineage>
        <taxon>Bacteria</taxon>
        <taxon>Pseudomonadati</taxon>
        <taxon>Campylobacterota</taxon>
        <taxon>Epsilonproteobacteria</taxon>
        <taxon>Campylobacterales</taxon>
        <taxon>Campylobacteraceae</taxon>
        <taxon>Campylobacter</taxon>
    </lineage>
</organism>
<name>PURA_CAMJR</name>
<proteinExistence type="inferred from homology"/>
<dbReference type="EC" id="6.3.4.4" evidence="1"/>
<dbReference type="EMBL" id="CP000025">
    <property type="protein sequence ID" value="AAW36104.1"/>
    <property type="molecule type" value="Genomic_DNA"/>
</dbReference>
<dbReference type="RefSeq" id="WP_002855302.1">
    <property type="nucleotide sequence ID" value="NC_003912.7"/>
</dbReference>
<dbReference type="SMR" id="Q5HST3"/>
<dbReference type="KEGG" id="cjr:CJE1671"/>
<dbReference type="HOGENOM" id="CLU_029848_0_0_7"/>
<dbReference type="UniPathway" id="UPA00075">
    <property type="reaction ID" value="UER00335"/>
</dbReference>
<dbReference type="GO" id="GO:0005737">
    <property type="term" value="C:cytoplasm"/>
    <property type="evidence" value="ECO:0007669"/>
    <property type="project" value="UniProtKB-SubCell"/>
</dbReference>
<dbReference type="GO" id="GO:0004019">
    <property type="term" value="F:adenylosuccinate synthase activity"/>
    <property type="evidence" value="ECO:0007669"/>
    <property type="project" value="UniProtKB-UniRule"/>
</dbReference>
<dbReference type="GO" id="GO:0005525">
    <property type="term" value="F:GTP binding"/>
    <property type="evidence" value="ECO:0007669"/>
    <property type="project" value="UniProtKB-UniRule"/>
</dbReference>
<dbReference type="GO" id="GO:0000287">
    <property type="term" value="F:magnesium ion binding"/>
    <property type="evidence" value="ECO:0007669"/>
    <property type="project" value="UniProtKB-UniRule"/>
</dbReference>
<dbReference type="GO" id="GO:0044208">
    <property type="term" value="P:'de novo' AMP biosynthetic process"/>
    <property type="evidence" value="ECO:0007669"/>
    <property type="project" value="UniProtKB-UniRule"/>
</dbReference>
<dbReference type="GO" id="GO:0046040">
    <property type="term" value="P:IMP metabolic process"/>
    <property type="evidence" value="ECO:0007669"/>
    <property type="project" value="TreeGrafter"/>
</dbReference>
<dbReference type="CDD" id="cd03108">
    <property type="entry name" value="AdSS"/>
    <property type="match status" value="1"/>
</dbReference>
<dbReference type="FunFam" id="1.10.300.10:FF:000001">
    <property type="entry name" value="Adenylosuccinate synthetase"/>
    <property type="match status" value="1"/>
</dbReference>
<dbReference type="FunFam" id="3.90.170.10:FF:000001">
    <property type="entry name" value="Adenylosuccinate synthetase"/>
    <property type="match status" value="1"/>
</dbReference>
<dbReference type="Gene3D" id="3.40.440.10">
    <property type="entry name" value="Adenylosuccinate Synthetase, subunit A, domain 1"/>
    <property type="match status" value="1"/>
</dbReference>
<dbReference type="Gene3D" id="1.10.300.10">
    <property type="entry name" value="Adenylosuccinate Synthetase, subunit A, domain 2"/>
    <property type="match status" value="1"/>
</dbReference>
<dbReference type="Gene3D" id="3.90.170.10">
    <property type="entry name" value="Adenylosuccinate Synthetase, subunit A, domain 3"/>
    <property type="match status" value="1"/>
</dbReference>
<dbReference type="HAMAP" id="MF_00011">
    <property type="entry name" value="Adenylosucc_synth"/>
    <property type="match status" value="1"/>
</dbReference>
<dbReference type="InterPro" id="IPR018220">
    <property type="entry name" value="Adenylosuccin_syn_GTP-bd"/>
</dbReference>
<dbReference type="InterPro" id="IPR033128">
    <property type="entry name" value="Adenylosuccin_syn_Lys_AS"/>
</dbReference>
<dbReference type="InterPro" id="IPR042109">
    <property type="entry name" value="Adenylosuccinate_synth_dom1"/>
</dbReference>
<dbReference type="InterPro" id="IPR042110">
    <property type="entry name" value="Adenylosuccinate_synth_dom2"/>
</dbReference>
<dbReference type="InterPro" id="IPR042111">
    <property type="entry name" value="Adenylosuccinate_synth_dom3"/>
</dbReference>
<dbReference type="InterPro" id="IPR001114">
    <property type="entry name" value="Adenylosuccinate_synthetase"/>
</dbReference>
<dbReference type="InterPro" id="IPR027417">
    <property type="entry name" value="P-loop_NTPase"/>
</dbReference>
<dbReference type="NCBIfam" id="NF002223">
    <property type="entry name" value="PRK01117.1"/>
    <property type="match status" value="1"/>
</dbReference>
<dbReference type="NCBIfam" id="TIGR00184">
    <property type="entry name" value="purA"/>
    <property type="match status" value="1"/>
</dbReference>
<dbReference type="PANTHER" id="PTHR11846">
    <property type="entry name" value="ADENYLOSUCCINATE SYNTHETASE"/>
    <property type="match status" value="1"/>
</dbReference>
<dbReference type="PANTHER" id="PTHR11846:SF0">
    <property type="entry name" value="ADENYLOSUCCINATE SYNTHETASE"/>
    <property type="match status" value="1"/>
</dbReference>
<dbReference type="Pfam" id="PF00709">
    <property type="entry name" value="Adenylsucc_synt"/>
    <property type="match status" value="1"/>
</dbReference>
<dbReference type="SMART" id="SM00788">
    <property type="entry name" value="Adenylsucc_synt"/>
    <property type="match status" value="1"/>
</dbReference>
<dbReference type="SUPFAM" id="SSF52540">
    <property type="entry name" value="P-loop containing nucleoside triphosphate hydrolases"/>
    <property type="match status" value="1"/>
</dbReference>
<dbReference type="PROSITE" id="PS01266">
    <property type="entry name" value="ADENYLOSUCCIN_SYN_1"/>
    <property type="match status" value="1"/>
</dbReference>
<dbReference type="PROSITE" id="PS00513">
    <property type="entry name" value="ADENYLOSUCCIN_SYN_2"/>
    <property type="match status" value="1"/>
</dbReference>